<proteinExistence type="inferred from homology"/>
<organism>
    <name type="scientific">Acanthamoeba polyphaga mimivirus</name>
    <name type="common">APMV</name>
    <dbReference type="NCBI Taxonomy" id="212035"/>
    <lineage>
        <taxon>Viruses</taxon>
        <taxon>Varidnaviria</taxon>
        <taxon>Bamfordvirae</taxon>
        <taxon>Nucleocytoviricota</taxon>
        <taxon>Megaviricetes</taxon>
        <taxon>Imitervirales</taxon>
        <taxon>Mimiviridae</taxon>
        <taxon>Megamimivirinae</taxon>
        <taxon>Mimivirus</taxon>
        <taxon>Mimivirus bradfordmassiliense</taxon>
    </lineage>
</organism>
<name>YL223_MIMIV</name>
<evidence type="ECO:0000305" key="1"/>
<dbReference type="EMBL" id="AY653733">
    <property type="protein sequence ID" value="AAV50496.1"/>
    <property type="molecule type" value="Genomic_DNA"/>
</dbReference>
<dbReference type="KEGG" id="vg:9924830"/>
<dbReference type="OrthoDB" id="39920at10239"/>
<dbReference type="Proteomes" id="UP000001134">
    <property type="component" value="Genome"/>
</dbReference>
<dbReference type="InterPro" id="IPR043919">
    <property type="entry name" value="DUF5758"/>
</dbReference>
<dbReference type="Pfam" id="PF19062">
    <property type="entry name" value="DUF5758"/>
    <property type="match status" value="1"/>
</dbReference>
<organismHost>
    <name type="scientific">Acanthamoeba polyphaga</name>
    <name type="common">Amoeba</name>
    <dbReference type="NCBI Taxonomy" id="5757"/>
</organismHost>
<keyword id="KW-1185">Reference proteome</keyword>
<reference key="1">
    <citation type="journal article" date="2004" name="Science">
        <title>The 1.2-megabase genome sequence of Mimivirus.</title>
        <authorList>
            <person name="Raoult D."/>
            <person name="Audic S."/>
            <person name="Robert C."/>
            <person name="Abergel C."/>
            <person name="Renesto P."/>
            <person name="Ogata H."/>
            <person name="La Scola B."/>
            <person name="Susan M."/>
            <person name="Claverie J.-M."/>
        </authorList>
    </citation>
    <scope>NUCLEOTIDE SEQUENCE [LARGE SCALE GENOMIC DNA]</scope>
    <source>
        <strain>Rowbotham-Bradford</strain>
    </source>
</reference>
<sequence>MTKKFIGKEDFANLQKNKSGIYISNDYITVYKKVYCKNRLYNSRTSFDSEESVHDIFNPESIVELEIPPGAIIVKPVSNNYTKMNKMRTNKAIVNKITRLIDNKQIDDSYVCYSTYDPSFRYKVGSTVGTRLDTNVNKTNVSGIHFFKDQKEAENY</sequence>
<gene>
    <name type="ordered locus">MIMI_L223</name>
</gene>
<feature type="chain" id="PRO_0000071246" description="Uncharacterized protein L223">
    <location>
        <begin position="1"/>
        <end position="156"/>
    </location>
</feature>
<comment type="similarity">
    <text evidence="1">Belongs to the mimivirus L223/L227/L812 family.</text>
</comment>
<protein>
    <recommendedName>
        <fullName>Uncharacterized protein L223</fullName>
    </recommendedName>
</protein>
<accession>Q5UQB8</accession>